<comment type="function">
    <text evidence="1">Nucleotidase that shows phosphatase activity on nucleoside 5'-monophosphates.</text>
</comment>
<comment type="catalytic activity">
    <reaction evidence="1">
        <text>a ribonucleoside 5'-phosphate + H2O = a ribonucleoside + phosphate</text>
        <dbReference type="Rhea" id="RHEA:12484"/>
        <dbReference type="ChEBI" id="CHEBI:15377"/>
        <dbReference type="ChEBI" id="CHEBI:18254"/>
        <dbReference type="ChEBI" id="CHEBI:43474"/>
        <dbReference type="ChEBI" id="CHEBI:58043"/>
        <dbReference type="EC" id="3.1.3.5"/>
    </reaction>
</comment>
<comment type="cofactor">
    <cofactor evidence="1">
        <name>a divalent metal cation</name>
        <dbReference type="ChEBI" id="CHEBI:60240"/>
    </cofactor>
    <text evidence="1">Binds 1 divalent metal cation per subunit.</text>
</comment>
<comment type="subcellular location">
    <subcellularLocation>
        <location evidence="1">Cytoplasm</location>
    </subcellularLocation>
</comment>
<comment type="similarity">
    <text evidence="1">Belongs to the SurE nucleotidase family.</text>
</comment>
<sequence>MNELKKPHILVCNDDGIEGEGIHVLAASMKKIGRVTVVAPAEPHSGMSHAMTLGVPLRIKEYQRNNRFFGYTVSGTPVDCIKVALSHILDDKPDILVSGINYGSNTATNTLYSGTVAAALEGAIQGITSLAFSLATYEHADFTYAGKFARKLAKKVLQQGIPADTILSVNIPNVPESEIAGVLSTSQGRSRWEENAIERNDMYGNPYYWLNGTLKLLDDSLRQDEYAVRRNYVTVTPLSCDLTNHTFLDSLNQWNLQK</sequence>
<protein>
    <recommendedName>
        <fullName evidence="1">5'-nucleotidase SurE</fullName>
        <ecNumber evidence="1">3.1.3.5</ecNumber>
    </recommendedName>
    <alternativeName>
        <fullName evidence="1">Nucleoside 5'-monophosphate phosphohydrolase</fullName>
    </alternativeName>
</protein>
<accession>B3EFW1</accession>
<feature type="chain" id="PRO_1000091988" description="5'-nucleotidase SurE">
    <location>
        <begin position="1"/>
        <end position="258"/>
    </location>
</feature>
<feature type="binding site" evidence="1">
    <location>
        <position position="14"/>
    </location>
    <ligand>
        <name>a divalent metal cation</name>
        <dbReference type="ChEBI" id="CHEBI:60240"/>
    </ligand>
</feature>
<feature type="binding site" evidence="1">
    <location>
        <position position="15"/>
    </location>
    <ligand>
        <name>a divalent metal cation</name>
        <dbReference type="ChEBI" id="CHEBI:60240"/>
    </ligand>
</feature>
<feature type="binding site" evidence="1">
    <location>
        <position position="45"/>
    </location>
    <ligand>
        <name>a divalent metal cation</name>
        <dbReference type="ChEBI" id="CHEBI:60240"/>
    </ligand>
</feature>
<feature type="binding site" evidence="1">
    <location>
        <position position="101"/>
    </location>
    <ligand>
        <name>a divalent metal cation</name>
        <dbReference type="ChEBI" id="CHEBI:60240"/>
    </ligand>
</feature>
<organism>
    <name type="scientific">Chlorobium limicola (strain DSM 245 / NBRC 103803 / 6330)</name>
    <dbReference type="NCBI Taxonomy" id="290315"/>
    <lineage>
        <taxon>Bacteria</taxon>
        <taxon>Pseudomonadati</taxon>
        <taxon>Chlorobiota</taxon>
        <taxon>Chlorobiia</taxon>
        <taxon>Chlorobiales</taxon>
        <taxon>Chlorobiaceae</taxon>
        <taxon>Chlorobium/Pelodictyon group</taxon>
        <taxon>Chlorobium</taxon>
    </lineage>
</organism>
<dbReference type="EC" id="3.1.3.5" evidence="1"/>
<dbReference type="EMBL" id="CP001097">
    <property type="protein sequence ID" value="ACD89494.1"/>
    <property type="molecule type" value="Genomic_DNA"/>
</dbReference>
<dbReference type="RefSeq" id="WP_012465375.1">
    <property type="nucleotide sequence ID" value="NC_010803.1"/>
</dbReference>
<dbReference type="SMR" id="B3EFW1"/>
<dbReference type="STRING" id="290315.Clim_0401"/>
<dbReference type="KEGG" id="cli:Clim_0401"/>
<dbReference type="eggNOG" id="COG0496">
    <property type="taxonomic scope" value="Bacteria"/>
</dbReference>
<dbReference type="HOGENOM" id="CLU_045192_1_0_10"/>
<dbReference type="OrthoDB" id="9780815at2"/>
<dbReference type="Proteomes" id="UP000008841">
    <property type="component" value="Chromosome"/>
</dbReference>
<dbReference type="GO" id="GO:0005737">
    <property type="term" value="C:cytoplasm"/>
    <property type="evidence" value="ECO:0007669"/>
    <property type="project" value="UniProtKB-SubCell"/>
</dbReference>
<dbReference type="GO" id="GO:0008254">
    <property type="term" value="F:3'-nucleotidase activity"/>
    <property type="evidence" value="ECO:0007669"/>
    <property type="project" value="TreeGrafter"/>
</dbReference>
<dbReference type="GO" id="GO:0008253">
    <property type="term" value="F:5'-nucleotidase activity"/>
    <property type="evidence" value="ECO:0007669"/>
    <property type="project" value="UniProtKB-UniRule"/>
</dbReference>
<dbReference type="GO" id="GO:0004309">
    <property type="term" value="F:exopolyphosphatase activity"/>
    <property type="evidence" value="ECO:0007669"/>
    <property type="project" value="TreeGrafter"/>
</dbReference>
<dbReference type="GO" id="GO:0046872">
    <property type="term" value="F:metal ion binding"/>
    <property type="evidence" value="ECO:0007669"/>
    <property type="project" value="UniProtKB-UniRule"/>
</dbReference>
<dbReference type="GO" id="GO:0000166">
    <property type="term" value="F:nucleotide binding"/>
    <property type="evidence" value="ECO:0007669"/>
    <property type="project" value="UniProtKB-KW"/>
</dbReference>
<dbReference type="FunFam" id="3.40.1210.10:FF:000001">
    <property type="entry name" value="5'/3'-nucleotidase SurE"/>
    <property type="match status" value="1"/>
</dbReference>
<dbReference type="Gene3D" id="3.40.1210.10">
    <property type="entry name" value="Survival protein SurE-like phosphatase/nucleotidase"/>
    <property type="match status" value="1"/>
</dbReference>
<dbReference type="HAMAP" id="MF_00060">
    <property type="entry name" value="SurE"/>
    <property type="match status" value="1"/>
</dbReference>
<dbReference type="InterPro" id="IPR030048">
    <property type="entry name" value="SurE"/>
</dbReference>
<dbReference type="InterPro" id="IPR002828">
    <property type="entry name" value="SurE-like_Pase/nucleotidase"/>
</dbReference>
<dbReference type="InterPro" id="IPR036523">
    <property type="entry name" value="SurE-like_sf"/>
</dbReference>
<dbReference type="NCBIfam" id="NF001490">
    <property type="entry name" value="PRK00346.1-4"/>
    <property type="match status" value="1"/>
</dbReference>
<dbReference type="NCBIfam" id="NF001492">
    <property type="entry name" value="PRK00346.2-2"/>
    <property type="match status" value="1"/>
</dbReference>
<dbReference type="NCBIfam" id="NF010542">
    <property type="entry name" value="PRK13932.1"/>
    <property type="match status" value="1"/>
</dbReference>
<dbReference type="NCBIfam" id="TIGR00087">
    <property type="entry name" value="surE"/>
    <property type="match status" value="1"/>
</dbReference>
<dbReference type="PANTHER" id="PTHR30457">
    <property type="entry name" value="5'-NUCLEOTIDASE SURE"/>
    <property type="match status" value="1"/>
</dbReference>
<dbReference type="PANTHER" id="PTHR30457:SF12">
    <property type="entry name" value="5'_3'-NUCLEOTIDASE SURE"/>
    <property type="match status" value="1"/>
</dbReference>
<dbReference type="Pfam" id="PF01975">
    <property type="entry name" value="SurE"/>
    <property type="match status" value="1"/>
</dbReference>
<dbReference type="SUPFAM" id="SSF64167">
    <property type="entry name" value="SurE-like"/>
    <property type="match status" value="1"/>
</dbReference>
<evidence type="ECO:0000255" key="1">
    <source>
        <dbReference type="HAMAP-Rule" id="MF_00060"/>
    </source>
</evidence>
<keyword id="KW-0963">Cytoplasm</keyword>
<keyword id="KW-0378">Hydrolase</keyword>
<keyword id="KW-0479">Metal-binding</keyword>
<keyword id="KW-0547">Nucleotide-binding</keyword>
<proteinExistence type="inferred from homology"/>
<gene>
    <name evidence="1" type="primary">surE</name>
    <name type="ordered locus">Clim_0401</name>
</gene>
<reference key="1">
    <citation type="submission" date="2008-05" db="EMBL/GenBank/DDBJ databases">
        <title>Complete sequence of Chlorobium limicola DSM 245.</title>
        <authorList>
            <consortium name="US DOE Joint Genome Institute"/>
            <person name="Lucas S."/>
            <person name="Copeland A."/>
            <person name="Lapidus A."/>
            <person name="Glavina del Rio T."/>
            <person name="Dalin E."/>
            <person name="Tice H."/>
            <person name="Bruce D."/>
            <person name="Goodwin L."/>
            <person name="Pitluck S."/>
            <person name="Schmutz J."/>
            <person name="Larimer F."/>
            <person name="Land M."/>
            <person name="Hauser L."/>
            <person name="Kyrpides N."/>
            <person name="Ovchinnikova G."/>
            <person name="Zhao F."/>
            <person name="Li T."/>
            <person name="Liu Z."/>
            <person name="Overmann J."/>
            <person name="Bryant D.A."/>
            <person name="Richardson P."/>
        </authorList>
    </citation>
    <scope>NUCLEOTIDE SEQUENCE [LARGE SCALE GENOMIC DNA]</scope>
    <source>
        <strain>DSM 245 / NBRC 103803 / 6330</strain>
    </source>
</reference>
<name>SURE_CHLL2</name>